<name>RPB1_PICGU</name>
<reference key="1">
    <citation type="journal article" date="2009" name="Nature">
        <title>Evolution of pathogenicity and sexual reproduction in eight Candida genomes.</title>
        <authorList>
            <person name="Butler G."/>
            <person name="Rasmussen M.D."/>
            <person name="Lin M.F."/>
            <person name="Santos M.A.S."/>
            <person name="Sakthikumar S."/>
            <person name="Munro C.A."/>
            <person name="Rheinbay E."/>
            <person name="Grabherr M."/>
            <person name="Forche A."/>
            <person name="Reedy J.L."/>
            <person name="Agrafioti I."/>
            <person name="Arnaud M.B."/>
            <person name="Bates S."/>
            <person name="Brown A.J.P."/>
            <person name="Brunke S."/>
            <person name="Costanzo M.C."/>
            <person name="Fitzpatrick D.A."/>
            <person name="de Groot P.W.J."/>
            <person name="Harris D."/>
            <person name="Hoyer L.L."/>
            <person name="Hube B."/>
            <person name="Klis F.M."/>
            <person name="Kodira C."/>
            <person name="Lennard N."/>
            <person name="Logue M.E."/>
            <person name="Martin R."/>
            <person name="Neiman A.M."/>
            <person name="Nikolaou E."/>
            <person name="Quail M.A."/>
            <person name="Quinn J."/>
            <person name="Santos M.C."/>
            <person name="Schmitzberger F.F."/>
            <person name="Sherlock G."/>
            <person name="Shah P."/>
            <person name="Silverstein K.A.T."/>
            <person name="Skrzypek M.S."/>
            <person name="Soll D."/>
            <person name="Staggs R."/>
            <person name="Stansfield I."/>
            <person name="Stumpf M.P.H."/>
            <person name="Sudbery P.E."/>
            <person name="Srikantha T."/>
            <person name="Zeng Q."/>
            <person name="Berman J."/>
            <person name="Berriman M."/>
            <person name="Heitman J."/>
            <person name="Gow N.A.R."/>
            <person name="Lorenz M.C."/>
            <person name="Birren B.W."/>
            <person name="Kellis M."/>
            <person name="Cuomo C.A."/>
        </authorList>
    </citation>
    <scope>NUCLEOTIDE SEQUENCE [LARGE SCALE GENOMIC DNA]</scope>
    <source>
        <strain>ATCC 6260 / CBS 566 / DSM 6381 / JCM 1539 / NBRC 10279 / NRRL Y-324</strain>
    </source>
</reference>
<reference key="2">
    <citation type="journal article" date="2004" name="J. Clin. Microbiol.">
        <title>Phylogeny and evolution of medical species of Candida and related taxa: a multigenic analysis.</title>
        <authorList>
            <person name="Diezmann S."/>
            <person name="Cox C.J."/>
            <person name="Schoenian G."/>
            <person name="Vilgalys R.J."/>
            <person name="Mitchell T.G."/>
        </authorList>
    </citation>
    <scope>NUCLEOTIDE SEQUENCE [GENOMIC DNA] OF 88-295</scope>
    <scope>VARIANT SER-198</scope>
    <source>
        <strain>ATCC 46036 / CBS 2030 / IFO 10106 / NRRL Y-2075</strain>
        <strain>MMRL 1635</strain>
        <strain>MMRL 1636</strain>
        <strain>MMRL 1759</strain>
    </source>
</reference>
<gene>
    <name type="primary">RPB1</name>
    <name type="ORF">PGUG_01108/01105</name>
</gene>
<evidence type="ECO:0000250" key="1"/>
<evidence type="ECO:0000250" key="2">
    <source>
        <dbReference type="UniProtKB" id="P04050"/>
    </source>
</evidence>
<evidence type="ECO:0000256" key="3">
    <source>
        <dbReference type="SAM" id="MobiDB-lite"/>
    </source>
</evidence>
<evidence type="ECO:0000269" key="4">
    <source>
    </source>
</evidence>
<evidence type="ECO:0000305" key="5"/>
<feature type="chain" id="PRO_0000295034" description="DNA-directed RNA polymerase II subunit RPB1">
    <location>
        <begin position="1"/>
        <end position="1579"/>
    </location>
</feature>
<feature type="repeat" description="1">
    <location>
        <begin position="1385"/>
        <end position="1391"/>
    </location>
</feature>
<feature type="repeat" description="2">
    <location>
        <begin position="1392"/>
        <end position="1398"/>
    </location>
</feature>
<feature type="repeat" description="3">
    <location>
        <begin position="1399"/>
        <end position="1405"/>
    </location>
</feature>
<feature type="repeat" description="4">
    <location>
        <begin position="1406"/>
        <end position="1412"/>
    </location>
</feature>
<feature type="repeat" description="5">
    <location>
        <begin position="1413"/>
        <end position="1419"/>
    </location>
</feature>
<feature type="repeat" description="6">
    <location>
        <begin position="1420"/>
        <end position="1426"/>
    </location>
</feature>
<feature type="repeat" description="7">
    <location>
        <begin position="1427"/>
        <end position="1433"/>
    </location>
</feature>
<feature type="repeat" description="8">
    <location>
        <begin position="1434"/>
        <end position="1440"/>
    </location>
</feature>
<feature type="repeat" description="9">
    <location>
        <begin position="1441"/>
        <end position="1447"/>
    </location>
</feature>
<feature type="repeat" description="10">
    <location>
        <begin position="1448"/>
        <end position="1454"/>
    </location>
</feature>
<feature type="repeat" description="11">
    <location>
        <begin position="1455"/>
        <end position="1461"/>
    </location>
</feature>
<feature type="repeat" description="12">
    <location>
        <begin position="1462"/>
        <end position="1468"/>
    </location>
</feature>
<feature type="repeat" description="13">
    <location>
        <begin position="1469"/>
        <end position="1475"/>
    </location>
</feature>
<feature type="repeat" description="14">
    <location>
        <begin position="1476"/>
        <end position="1482"/>
    </location>
</feature>
<feature type="repeat" description="15">
    <location>
        <begin position="1483"/>
        <end position="1489"/>
    </location>
</feature>
<feature type="repeat" description="16">
    <location>
        <begin position="1490"/>
        <end position="1496"/>
    </location>
</feature>
<feature type="repeat" description="17; approximate">
    <location>
        <begin position="1497"/>
        <end position="1503"/>
    </location>
</feature>
<feature type="repeat" description="18">
    <location>
        <begin position="1504"/>
        <end position="1510"/>
    </location>
</feature>
<feature type="repeat" description="19">
    <location>
        <begin position="1511"/>
        <end position="1517"/>
    </location>
</feature>
<feature type="repeat" description="20">
    <location>
        <begin position="1518"/>
        <end position="1524"/>
    </location>
</feature>
<feature type="repeat" description="21">
    <location>
        <begin position="1525"/>
        <end position="1531"/>
    </location>
</feature>
<feature type="repeat" description="22">
    <location>
        <begin position="1532"/>
        <end position="1538"/>
    </location>
</feature>
<feature type="repeat" description="23">
    <location>
        <begin position="1539"/>
        <end position="1545"/>
    </location>
</feature>
<feature type="repeat" description="24">
    <location>
        <begin position="1546"/>
        <end position="1552"/>
    </location>
</feature>
<feature type="repeat" description="25; approximate">
    <location>
        <begin position="1553"/>
        <end position="1559"/>
    </location>
</feature>
<feature type="repeat" description="26; approximate">
    <location>
        <begin position="1560"/>
        <end position="1566"/>
    </location>
</feature>
<feature type="region of interest" description="Bridging helix" evidence="1">
    <location>
        <begin position="642"/>
        <end position="654"/>
    </location>
</feature>
<feature type="region of interest" description="Disordered" evidence="3">
    <location>
        <begin position="1382"/>
        <end position="1579"/>
    </location>
</feature>
<feature type="region of interest" description="C-terminal domain (CTD); 26 X 7 AA approximate tandem repeats of Y-S-P-T-S-P-[S-A-Q]">
    <location>
        <begin position="1385"/>
        <end position="1566"/>
    </location>
</feature>
<feature type="compositionally biased region" description="Low complexity" evidence="3">
    <location>
        <begin position="1382"/>
        <end position="1565"/>
    </location>
</feature>
<feature type="binding site" evidence="2">
    <location>
        <position position="68"/>
    </location>
    <ligand>
        <name>Zn(2+)</name>
        <dbReference type="ChEBI" id="CHEBI:29105"/>
        <label>1</label>
    </ligand>
</feature>
<feature type="binding site" evidence="2">
    <location>
        <position position="71"/>
    </location>
    <ligand>
        <name>Zn(2+)</name>
        <dbReference type="ChEBI" id="CHEBI:29105"/>
        <label>1</label>
    </ligand>
</feature>
<feature type="binding site" evidence="2">
    <location>
        <position position="78"/>
    </location>
    <ligand>
        <name>Zn(2+)</name>
        <dbReference type="ChEBI" id="CHEBI:29105"/>
        <label>1</label>
    </ligand>
</feature>
<feature type="binding site" evidence="2">
    <location>
        <position position="81"/>
    </location>
    <ligand>
        <name>Zn(2+)</name>
        <dbReference type="ChEBI" id="CHEBI:29105"/>
        <label>1</label>
    </ligand>
</feature>
<feature type="binding site" evidence="2">
    <location>
        <position position="108"/>
    </location>
    <ligand>
        <name>Zn(2+)</name>
        <dbReference type="ChEBI" id="CHEBI:29105"/>
        <label>2</label>
    </ligand>
</feature>
<feature type="binding site" evidence="2">
    <location>
        <position position="111"/>
    </location>
    <ligand>
        <name>Zn(2+)</name>
        <dbReference type="ChEBI" id="CHEBI:29105"/>
        <label>2</label>
    </ligand>
</feature>
<feature type="binding site" evidence="2">
    <location>
        <position position="149"/>
    </location>
    <ligand>
        <name>Zn(2+)</name>
        <dbReference type="ChEBI" id="CHEBI:29105"/>
        <label>2</label>
    </ligand>
</feature>
<feature type="binding site" evidence="2">
    <location>
        <position position="171"/>
    </location>
    <ligand>
        <name>Zn(2+)</name>
        <dbReference type="ChEBI" id="CHEBI:29105"/>
        <label>2</label>
    </ligand>
</feature>
<feature type="binding site" evidence="2">
    <location>
        <position position="485"/>
    </location>
    <ligand>
        <name>Mg(2+)</name>
        <dbReference type="ChEBI" id="CHEBI:18420"/>
        <label>1</label>
        <note>catalytic</note>
    </ligand>
</feature>
<feature type="binding site" evidence="2">
    <location>
        <position position="485"/>
    </location>
    <ligand>
        <name>Mg(2+)</name>
        <dbReference type="ChEBI" id="CHEBI:18420"/>
        <label>2</label>
        <note>ligand shared with RPB2</note>
    </ligand>
</feature>
<feature type="binding site" evidence="2">
    <location>
        <position position="487"/>
    </location>
    <ligand>
        <name>Mg(2+)</name>
        <dbReference type="ChEBI" id="CHEBI:18420"/>
        <label>1</label>
        <note>catalytic</note>
    </ligand>
</feature>
<feature type="binding site" evidence="2">
    <location>
        <position position="487"/>
    </location>
    <ligand>
        <name>Mg(2+)</name>
        <dbReference type="ChEBI" id="CHEBI:18420"/>
        <label>2</label>
        <note>ligand shared with RPB2</note>
    </ligand>
</feature>
<feature type="binding site" evidence="2">
    <location>
        <position position="489"/>
    </location>
    <ligand>
        <name>Mg(2+)</name>
        <dbReference type="ChEBI" id="CHEBI:18420"/>
        <label>1</label>
        <note>catalytic</note>
    </ligand>
</feature>
<feature type="cross-link" description="Glycyl lysine isopeptide (Lys-Gly) (interchain with G-Cter in ubiquitin)" evidence="2">
    <location>
        <position position="1080"/>
    </location>
</feature>
<feature type="sequence variant" description="In strain: MmRL 1635." evidence="4">
    <original>T</original>
    <variation>S</variation>
    <location>
        <position position="198"/>
    </location>
</feature>
<feature type="non-consecutive residues" evidence="5">
    <location>
        <begin position="566"/>
        <end position="567"/>
    </location>
</feature>
<dbReference type="EC" id="2.7.7.6"/>
<dbReference type="EMBL" id="CH408155">
    <property type="protein sequence ID" value="EDK37008.1"/>
    <property type="status" value="ALT_FRAME"/>
    <property type="molecule type" value="Genomic_DNA"/>
</dbReference>
<dbReference type="EMBL" id="CH408155">
    <property type="protein sequence ID" value="EDK37010.1"/>
    <property type="status" value="ALT_FRAME"/>
    <property type="molecule type" value="Genomic_DNA"/>
</dbReference>
<dbReference type="EMBL" id="AY497711">
    <property type="protein sequence ID" value="AAT12588.1"/>
    <property type="molecule type" value="Genomic_DNA"/>
</dbReference>
<dbReference type="EMBL" id="AY497732">
    <property type="protein sequence ID" value="AAT12608.1"/>
    <property type="molecule type" value="Genomic_DNA"/>
</dbReference>
<dbReference type="EMBL" id="AY497733">
    <property type="protein sequence ID" value="AAT12609.1"/>
    <property type="molecule type" value="Genomic_DNA"/>
</dbReference>
<dbReference type="EMBL" id="AY497734">
    <property type="protein sequence ID" value="AAT12610.1"/>
    <property type="molecule type" value="Genomic_DNA"/>
</dbReference>
<dbReference type="RefSeq" id="XP_001487729.1">
    <property type="nucleotide sequence ID" value="XM_001487679.1"/>
</dbReference>
<dbReference type="RefSeq" id="XP_001487731.1">
    <property type="nucleotide sequence ID" value="XM_001487681.1"/>
</dbReference>
<dbReference type="SMR" id="A5DCV3"/>
<dbReference type="FunCoup" id="A5DCV3">
    <property type="interactions" value="1149"/>
</dbReference>
<dbReference type="STRING" id="294746.A5DCV3"/>
<dbReference type="KEGG" id="pgu:PGUG_01105"/>
<dbReference type="KEGG" id="pgu:PGUG_01108"/>
<dbReference type="eggNOG" id="KOG0260">
    <property type="taxonomic scope" value="Eukaryota"/>
</dbReference>
<dbReference type="HOGENOM" id="CLU_000487_1_1_1"/>
<dbReference type="InParanoid" id="A5DCV3"/>
<dbReference type="OrthoDB" id="270392at2759"/>
<dbReference type="Proteomes" id="UP000001997">
    <property type="component" value="Unassembled WGS sequence"/>
</dbReference>
<dbReference type="GO" id="GO:0005739">
    <property type="term" value="C:mitochondrion"/>
    <property type="evidence" value="ECO:0007669"/>
    <property type="project" value="GOC"/>
</dbReference>
<dbReference type="GO" id="GO:0005665">
    <property type="term" value="C:RNA polymerase II, core complex"/>
    <property type="evidence" value="ECO:0007669"/>
    <property type="project" value="TreeGrafter"/>
</dbReference>
<dbReference type="GO" id="GO:0003677">
    <property type="term" value="F:DNA binding"/>
    <property type="evidence" value="ECO:0007669"/>
    <property type="project" value="UniProtKB-KW"/>
</dbReference>
<dbReference type="GO" id="GO:0003899">
    <property type="term" value="F:DNA-directed RNA polymerase activity"/>
    <property type="evidence" value="ECO:0007669"/>
    <property type="project" value="UniProtKB-EC"/>
</dbReference>
<dbReference type="GO" id="GO:0046872">
    <property type="term" value="F:metal ion binding"/>
    <property type="evidence" value="ECO:0007669"/>
    <property type="project" value="UniProtKB-KW"/>
</dbReference>
<dbReference type="GO" id="GO:0006366">
    <property type="term" value="P:transcription by RNA polymerase II"/>
    <property type="evidence" value="ECO:0007669"/>
    <property type="project" value="InterPro"/>
</dbReference>
<dbReference type="CDD" id="cd02584">
    <property type="entry name" value="RNAP_II_Rpb1_C"/>
    <property type="match status" value="1"/>
</dbReference>
<dbReference type="CDD" id="cd02733">
    <property type="entry name" value="RNAP_II_RPB1_N"/>
    <property type="match status" value="1"/>
</dbReference>
<dbReference type="FunFam" id="2.40.40.20:FF:000019">
    <property type="entry name" value="DNA-directed RNA polymerase II subunit RPB1"/>
    <property type="match status" value="1"/>
</dbReference>
<dbReference type="FunFam" id="1.10.150.390:FF:000001">
    <property type="entry name" value="DNA-directed RNA polymerase subunit"/>
    <property type="match status" value="1"/>
</dbReference>
<dbReference type="FunFam" id="3.30.1360.140:FF:000001">
    <property type="entry name" value="DNA-directed RNA polymerase subunit"/>
    <property type="match status" value="1"/>
</dbReference>
<dbReference type="FunFam" id="3.30.1490.180:FF:000001">
    <property type="entry name" value="DNA-directed RNA polymerase subunit"/>
    <property type="match status" value="1"/>
</dbReference>
<dbReference type="FunFam" id="4.10.860.120:FF:000003">
    <property type="entry name" value="DNA-directed RNA polymerase subunit"/>
    <property type="match status" value="1"/>
</dbReference>
<dbReference type="Gene3D" id="1.10.132.30">
    <property type="match status" value="1"/>
</dbReference>
<dbReference type="Gene3D" id="1.10.150.390">
    <property type="match status" value="1"/>
</dbReference>
<dbReference type="Gene3D" id="2.40.40.20">
    <property type="match status" value="1"/>
</dbReference>
<dbReference type="Gene3D" id="3.30.1360.140">
    <property type="match status" value="1"/>
</dbReference>
<dbReference type="Gene3D" id="6.10.250.2940">
    <property type="match status" value="1"/>
</dbReference>
<dbReference type="Gene3D" id="6.20.50.80">
    <property type="match status" value="1"/>
</dbReference>
<dbReference type="Gene3D" id="3.30.1490.180">
    <property type="entry name" value="RNA polymerase ii"/>
    <property type="match status" value="1"/>
</dbReference>
<dbReference type="Gene3D" id="4.10.860.120">
    <property type="entry name" value="RNA polymerase II, clamp domain"/>
    <property type="match status" value="2"/>
</dbReference>
<dbReference type="InterPro" id="IPR045867">
    <property type="entry name" value="DNA-dir_RpoC_beta_prime"/>
</dbReference>
<dbReference type="InterPro" id="IPR000722">
    <property type="entry name" value="RNA_pol_asu"/>
</dbReference>
<dbReference type="InterPro" id="IPR000684">
    <property type="entry name" value="RNA_pol_II_repeat_euk"/>
</dbReference>
<dbReference type="InterPro" id="IPR006592">
    <property type="entry name" value="RNA_pol_N"/>
</dbReference>
<dbReference type="InterPro" id="IPR007080">
    <property type="entry name" value="RNA_pol_Rpb1_1"/>
</dbReference>
<dbReference type="InterPro" id="IPR007066">
    <property type="entry name" value="RNA_pol_Rpb1_3"/>
</dbReference>
<dbReference type="InterPro" id="IPR007083">
    <property type="entry name" value="RNA_pol_Rpb1_4"/>
</dbReference>
<dbReference type="InterPro" id="IPR007081">
    <property type="entry name" value="RNA_pol_Rpb1_5"/>
</dbReference>
<dbReference type="InterPro" id="IPR007075">
    <property type="entry name" value="RNA_pol_Rpb1_6"/>
</dbReference>
<dbReference type="InterPro" id="IPR007073">
    <property type="entry name" value="RNA_pol_Rpb1_7"/>
</dbReference>
<dbReference type="InterPro" id="IPR038593">
    <property type="entry name" value="RNA_pol_Rpb1_7_sf"/>
</dbReference>
<dbReference type="InterPro" id="IPR044893">
    <property type="entry name" value="RNA_pol_Rpb1_clamp_domain"/>
</dbReference>
<dbReference type="InterPro" id="IPR038120">
    <property type="entry name" value="Rpb1_funnel_sf"/>
</dbReference>
<dbReference type="PANTHER" id="PTHR19376">
    <property type="entry name" value="DNA-DIRECTED RNA POLYMERASE"/>
    <property type="match status" value="1"/>
</dbReference>
<dbReference type="PANTHER" id="PTHR19376:SF37">
    <property type="entry name" value="DNA-DIRECTED RNA POLYMERASE II SUBUNIT RPB1"/>
    <property type="match status" value="1"/>
</dbReference>
<dbReference type="Pfam" id="PF04997">
    <property type="entry name" value="RNA_pol_Rpb1_1"/>
    <property type="match status" value="1"/>
</dbReference>
<dbReference type="Pfam" id="PF00623">
    <property type="entry name" value="RNA_pol_Rpb1_2"/>
    <property type="match status" value="1"/>
</dbReference>
<dbReference type="Pfam" id="PF04983">
    <property type="entry name" value="RNA_pol_Rpb1_3"/>
    <property type="match status" value="1"/>
</dbReference>
<dbReference type="Pfam" id="PF05000">
    <property type="entry name" value="RNA_pol_Rpb1_4"/>
    <property type="match status" value="1"/>
</dbReference>
<dbReference type="Pfam" id="PF04998">
    <property type="entry name" value="RNA_pol_Rpb1_5"/>
    <property type="match status" value="1"/>
</dbReference>
<dbReference type="Pfam" id="PF04992">
    <property type="entry name" value="RNA_pol_Rpb1_6"/>
    <property type="match status" value="1"/>
</dbReference>
<dbReference type="Pfam" id="PF04990">
    <property type="entry name" value="RNA_pol_Rpb1_7"/>
    <property type="match status" value="1"/>
</dbReference>
<dbReference type="Pfam" id="PF05001">
    <property type="entry name" value="RNA_pol_Rpb1_R"/>
    <property type="match status" value="15"/>
</dbReference>
<dbReference type="PRINTS" id="PR01217">
    <property type="entry name" value="PRICHEXTENSN"/>
</dbReference>
<dbReference type="SMART" id="SM00663">
    <property type="entry name" value="RPOLA_N"/>
    <property type="match status" value="1"/>
</dbReference>
<dbReference type="SUPFAM" id="SSF64484">
    <property type="entry name" value="beta and beta-prime subunits of DNA dependent RNA-polymerase"/>
    <property type="match status" value="1"/>
</dbReference>
<dbReference type="PROSITE" id="PS00115">
    <property type="entry name" value="RNA_POL_II_REPEAT"/>
    <property type="match status" value="21"/>
</dbReference>
<organism>
    <name type="scientific">Meyerozyma guilliermondii (strain ATCC 6260 / CBS 566 / DSM 6381 / JCM 1539 / NBRC 10279 / NRRL Y-324)</name>
    <name type="common">Yeast</name>
    <name type="synonym">Candida guilliermondii</name>
    <dbReference type="NCBI Taxonomy" id="294746"/>
    <lineage>
        <taxon>Eukaryota</taxon>
        <taxon>Fungi</taxon>
        <taxon>Dikarya</taxon>
        <taxon>Ascomycota</taxon>
        <taxon>Saccharomycotina</taxon>
        <taxon>Pichiomycetes</taxon>
        <taxon>Debaryomycetaceae</taxon>
        <taxon>Meyerozyma</taxon>
    </lineage>
</organism>
<comment type="function">
    <text evidence="1">DNA-dependent RNA polymerase catalyzes the transcription of DNA into RNA using the four ribonucleoside triphosphates as substrates. Largest and catalytic component of RNA polymerase II which synthesizes mRNA precursors and many functional non-coding RNAs. Forms the polymerase active center together with the second largest subunit. Pol II is the central component of the basal RNA polymerase II transcription machinery. It is composed of mobile elements that move relative to each other. RPB1 is part of the core element with the central large cleft, the clamp element that moves to open and close the cleft and the jaws that are thought to grab the incoming DNA template. At the start of transcription, a single-stranded DNA template strand of the promoter is positioned within the central active site cleft of Pol II. A bridging helix emanates from RPB1 and crosses the cleft near the catalytic site and is thought to promote translocation of Pol II by acting as a ratchet that moves the RNA-DNA hybrid through the active site by switching from straight to bent conformations at each step of nucleotide addition. During transcription elongation, Pol II moves on the template as the transcript elongates. Elongation is influenced by the phosphorylation status of the C-terminal domain (CTD) of Pol II largest subunit (RPB1), which serves as a platform for assembly of factors that regulate transcription initiation, elongation, termination and mRNA processing (By similarity).</text>
</comment>
<comment type="catalytic activity">
    <reaction>
        <text>RNA(n) + a ribonucleoside 5'-triphosphate = RNA(n+1) + diphosphate</text>
        <dbReference type="Rhea" id="RHEA:21248"/>
        <dbReference type="Rhea" id="RHEA-COMP:14527"/>
        <dbReference type="Rhea" id="RHEA-COMP:17342"/>
        <dbReference type="ChEBI" id="CHEBI:33019"/>
        <dbReference type="ChEBI" id="CHEBI:61557"/>
        <dbReference type="ChEBI" id="CHEBI:140395"/>
        <dbReference type="EC" id="2.7.7.6"/>
    </reaction>
</comment>
<comment type="subunit">
    <text evidence="1">Component of the RNA polymerase II (Pol II) complex consisting of 12 subunits.</text>
</comment>
<comment type="subcellular location">
    <subcellularLocation>
        <location evidence="2">Nucleus</location>
    </subcellularLocation>
</comment>
<comment type="domain">
    <text evidence="5">The C-terminal domain (CTD) serves as a platform for assembly of factors that regulate transcription initiation, elongation, termination and mRNA processing.</text>
</comment>
<comment type="PTM">
    <text evidence="2">The tandem 7 residues repeats in the C-terminal domain (CTD) can be highly phosphorylated. The phosphorylation activates Pol II. Phosphorylation occurs mainly at residues 'Ser-2' and 'Ser-5' of the heptapeptide repeat. The phosphorylation state is believed to result from the balanced action of site-specific CTD kinases and phosphatase, and a 'CTD code' that specifies the position of Pol II within the transcription cycle has been proposed (By similarity).</text>
</comment>
<comment type="PTM">
    <text evidence="2">Following transcription stress, the elongating form of RNA polymerase II (RNA pol IIo) is polyubiquitinated via 'Lys-63'-linkages on Lys-1080 at DNA damage sites without leading to degradation: ubiquitination promotes RNA pol IIo backtracking to allow access by the transcription-coupled nucleotide excision repair (TC-NER) machinery. Subsequent DEF1-dependent polyubiquitination by the elongin complex via 'Lys-48'-linkages may lead to proteasome-mediated degradation; presumably at stalled RNA pol II where TC-NER has failed, to halt global transcription and enable 'last resort' DNA repair pathways.</text>
</comment>
<comment type="miscellaneous">
    <text>The binding of ribonucleoside triphosphate to the RNA polymerase II transcribing complex probably involves a two-step mechanism. The initial binding seems to occur at the entry (E) site and involves a magnesium ion temporarily coordinated by three conserved aspartate residues of the two largest RNA Pol II subunits. The ribonucleoside triphosphate is transferred by a rotation to the nucleotide addition (A) site for pairing with the template DNA. The catalytic A site involves three conserved aspartate residues of the RNA Pol II largest subunit which permanently coordinate a second magnesium ion.</text>
</comment>
<comment type="similarity">
    <text evidence="5">Belongs to the RNA polymerase beta' chain family.</text>
</comment>
<comment type="sequence caution" evidence="5">
    <conflict type="frameshift">
        <sequence resource="EMBL-CDS" id="EDK37008"/>
    </conflict>
</comment>
<comment type="sequence caution" evidence="5">
    <conflict type="frameshift">
        <sequence resource="EMBL-CDS" id="EDK37010"/>
    </conflict>
</comment>
<accession>A5DCV3</accession>
<accession>A5DCV0</accession>
<accession>Q6JE96</accession>
<accession>Q6JE97</accession>
<accession>Q6JE98</accession>
<protein>
    <recommendedName>
        <fullName>DNA-directed RNA polymerase II subunit RPB1</fullName>
        <shortName>RNA polymerase II subunit 1</shortName>
        <shortName>RNA polymerase II subunit B1</shortName>
        <ecNumber>2.7.7.6</ecNumber>
    </recommendedName>
    <alternativeName>
        <fullName>DNA-directed RNA polymerase III largest subunit</fullName>
    </alternativeName>
</protein>
<sequence>MSRQFPHSSAPLRSVKEVQFGLLSPEEVRAISVAKIEYPETMDQATKRPREGGLNDPRLGSIDRNFKCQTCGEDMAECPGHFGHIELAKPVFHIGFIAKIKKVCECVCMHCGKLLLDESNPAMAQAIRIRDPKKRFNAVWNLCKGKMICEADVLQDDGEGNEPKRTSRGGCGHTQPVVRKDGLKLWGTWKQNKNYDETEQPERRLLTPSEILNVFKHINSEDCVRLGFNEDYARPEWMLITVLPVPPPPVRPSIAFNDTARGEDDLTFKLADVIKANINVQRLELDGSPQHVISEFEALLQFHVATYMDNDIAGQPQALQKTGRPIKSIRARLKGKEGRLRGNLMGKRVDFSARTVISGDPNLDLDQVGVPISIARTLTYPEIVTPYNIHRLTEYVRNGPNEHPGAKYVIRDTGDRIDLRYNKRAGDIALQYGWKVERHLMDDDPVLFNRQPSLHKMSMMCHRVKVMPYSTFRLNLSVTSPYNADFDGDEMNLHVPQSPETRAELSEICAVPLQIVSPQSNKPVMGIVQDTLCGVRKMTLRDIFIEYDQVMNMLYWIPDWDGVIPPMNLKDLNNVKQMVVSGSKGSFINISQMSACVGQQIVEGKRIPFGFADRSLPHFTKDDYSPESKGFVENSYLRGLTPQEFFFHAMAGREGLIDTAVKTAETGYIQRRLVKALEDIMVHYDGTTRNSLGDIIQFVYGEDGVDGTQVESQSVDVIPGTDESFERRYRVDLLDPEKCIRDSLLESGKEVRGDVNLQRVLDEEYEQLCNDRRYLREVCFTNGDYTWPLPVNLRRIIQNAQQLFHGGRHKASDLRLEEIVEGVKELCKKLLVLRGDSPLVKESQENATLLFQCLVRSRLATRRVIEEFRLNRMSFEWAMGEIETQFQKSLVHPGEMVGVIAAQSIGEPATQMTLNTFHYAGVSSKNVTLGVPRLKEILNVAKNIKTPALTVYLEKDIAADIEKAKVVQSAIEHTTLKNVTASTEIFYDPDPRSTVLEEDYDTVEAYFAIPDEKVEESIEKQSPWLLRLELDRAKMLDKQLTMAQVAEKISQNFGEDLFVIWSDDTADKLIIRCRVVRDPKSLDEDVDAEEDQILKRIEAHMLESISLRGIQGITRVFMMQHKLSLPDETGEFKQGQEWVLETDGVNLADVMAVPGVDAKRTYSNNFIEILSVLGIEATRSALFKEILNVIAFDGSYVNYRHMALLVDVMTARGHLMAITRHGINRADTGALMRCSFEETVEILLEAGAAAELDDCHGISENVVLGQLAPLGTGAFDVMVDDKILQSSPSNMSVPVGAAEGAGAYADDGGATPYREYDMEDDKIQFEEGAGFSPIHTAPVSDGAGALTAYGGQPGSPSPTSPFAYGATSPAYGGASPGYGVTSPTYSPTSPSYSPTSPSYSPTSPSYSPTSPSYSPTSPSYSPTSPSYSPTSPSYSPTSPSYSPTSPSYSPTSPSYSPTSPSYSPTSPSYSPTSPSYSPTSPSYSPTSPSYSPTSPSYSPTSPLYSPTSPSYSPTSPSYSPTSPSYSPTSPSYSPTSPQYSPTSPAYSPTSPQYSPNSPQYSPRSPLYSPDQNDDKDKKQ</sequence>
<keyword id="KW-0238">DNA-binding</keyword>
<keyword id="KW-0240">DNA-directed RNA polymerase</keyword>
<keyword id="KW-1017">Isopeptide bond</keyword>
<keyword id="KW-0460">Magnesium</keyword>
<keyword id="KW-0479">Metal-binding</keyword>
<keyword id="KW-0548">Nucleotidyltransferase</keyword>
<keyword id="KW-0539">Nucleus</keyword>
<keyword id="KW-0597">Phosphoprotein</keyword>
<keyword id="KW-1185">Reference proteome</keyword>
<keyword id="KW-0677">Repeat</keyword>
<keyword id="KW-0804">Transcription</keyword>
<keyword id="KW-0808">Transferase</keyword>
<keyword id="KW-0832">Ubl conjugation</keyword>
<keyword id="KW-0862">Zinc</keyword>
<proteinExistence type="inferred from homology"/>